<feature type="signal peptide" evidence="2">
    <location>
        <begin position="1"/>
        <end position="23"/>
    </location>
</feature>
<feature type="chain" id="PRO_0000006952" description="Beta-defensin 40">
    <location>
        <begin position="24"/>
        <end position="73"/>
    </location>
</feature>
<feature type="disulfide bond" evidence="1">
    <location>
        <begin position="29"/>
        <end position="58"/>
    </location>
</feature>
<feature type="disulfide bond" evidence="1">
    <location>
        <begin position="36"/>
        <end position="51"/>
    </location>
</feature>
<feature type="disulfide bond" evidence="1">
    <location>
        <begin position="41"/>
        <end position="59"/>
    </location>
</feature>
<feature type="sequence conflict" description="In Ref. 2; CAE17670." evidence="4" ref="2">
    <original>S</original>
    <variation>N</variation>
    <location>
        <position position="68"/>
    </location>
</feature>
<sequence>MKISCFLLMIFFLSCFQINPVAVLDTIKCLQGNNNCHIQKCPWFLLQVSTCYKGKGRCCQKRRWFARSHVYHV</sequence>
<gene>
    <name type="primary">Defb40</name>
</gene>
<comment type="function">
    <text evidence="1">Has antibacterial activity.</text>
</comment>
<comment type="subcellular location">
    <subcellularLocation>
        <location evidence="1">Secreted</location>
    </subcellularLocation>
</comment>
<comment type="tissue specificity">
    <text evidence="3">Only expressed in epididymis (corpus, cauda and caput).</text>
</comment>
<comment type="similarity">
    <text evidence="4">Belongs to the beta-defensin family.</text>
</comment>
<dbReference type="EMBL" id="AJ575426">
    <property type="protein sequence ID" value="CAE01399.1"/>
    <property type="molecule type" value="mRNA"/>
</dbReference>
<dbReference type="EMBL" id="AJ578473">
    <property type="protein sequence ID" value="CAE17670.1"/>
    <property type="molecule type" value="mRNA"/>
</dbReference>
<dbReference type="CCDS" id="CCDS40246.1"/>
<dbReference type="RefSeq" id="NP_898860.3">
    <property type="nucleotide sequence ID" value="NM_183039.3"/>
</dbReference>
<dbReference type="SMR" id="Q70KL2"/>
<dbReference type="FunCoup" id="Q70KL2">
    <property type="interactions" value="32"/>
</dbReference>
<dbReference type="STRING" id="10090.ENSMUSP00000066465"/>
<dbReference type="PaxDb" id="10090-ENSMUSP00000066465"/>
<dbReference type="DNASU" id="360217"/>
<dbReference type="GeneID" id="360217"/>
<dbReference type="KEGG" id="mmu:360217"/>
<dbReference type="UCSC" id="uc009kzy.1">
    <property type="organism name" value="mouse"/>
</dbReference>
<dbReference type="AGR" id="MGI:2672976"/>
<dbReference type="CTD" id="360217"/>
<dbReference type="MGI" id="MGI:2672976">
    <property type="gene designation" value="Defb40"/>
</dbReference>
<dbReference type="InParanoid" id="Q70KL2"/>
<dbReference type="OrthoDB" id="9622366at2759"/>
<dbReference type="PhylomeDB" id="Q70KL2"/>
<dbReference type="BioGRID-ORCS" id="360217">
    <property type="hits" value="1 hit in 77 CRISPR screens"/>
</dbReference>
<dbReference type="PRO" id="PR:Q70KL2"/>
<dbReference type="Proteomes" id="UP000000589">
    <property type="component" value="Unplaced"/>
</dbReference>
<dbReference type="RNAct" id="Q70KL2">
    <property type="molecule type" value="protein"/>
</dbReference>
<dbReference type="GO" id="GO:0005576">
    <property type="term" value="C:extracellular region"/>
    <property type="evidence" value="ECO:0007669"/>
    <property type="project" value="UniProtKB-SubCell"/>
</dbReference>
<dbReference type="GO" id="GO:0042742">
    <property type="term" value="P:defense response to bacterium"/>
    <property type="evidence" value="ECO:0007669"/>
    <property type="project" value="UniProtKB-KW"/>
</dbReference>
<dbReference type="InterPro" id="IPR001855">
    <property type="entry name" value="Defensin_beta-like"/>
</dbReference>
<dbReference type="PANTHER" id="PTHR21388:SF7">
    <property type="entry name" value="BETA-DEFENSIN 40"/>
    <property type="match status" value="1"/>
</dbReference>
<dbReference type="PANTHER" id="PTHR21388">
    <property type="entry name" value="BETA-DEFENSIN-RELATED"/>
    <property type="match status" value="1"/>
</dbReference>
<dbReference type="Pfam" id="PF00711">
    <property type="entry name" value="Defensin_beta"/>
    <property type="match status" value="1"/>
</dbReference>
<dbReference type="SUPFAM" id="SSF57392">
    <property type="entry name" value="Defensin-like"/>
    <property type="match status" value="1"/>
</dbReference>
<name>DFB40_MOUSE</name>
<proteinExistence type="evidence at transcript level"/>
<accession>Q70KL2</accession>
<accession>Q7TNV5</accession>
<organism>
    <name type="scientific">Mus musculus</name>
    <name type="common">Mouse</name>
    <dbReference type="NCBI Taxonomy" id="10090"/>
    <lineage>
        <taxon>Eukaryota</taxon>
        <taxon>Metazoa</taxon>
        <taxon>Chordata</taxon>
        <taxon>Craniata</taxon>
        <taxon>Vertebrata</taxon>
        <taxon>Euteleostomi</taxon>
        <taxon>Mammalia</taxon>
        <taxon>Eutheria</taxon>
        <taxon>Euarchontoglires</taxon>
        <taxon>Glires</taxon>
        <taxon>Rodentia</taxon>
        <taxon>Myomorpha</taxon>
        <taxon>Muroidea</taxon>
        <taxon>Muridae</taxon>
        <taxon>Murinae</taxon>
        <taxon>Mus</taxon>
        <taxon>Mus</taxon>
    </lineage>
</organism>
<protein>
    <recommendedName>
        <fullName>Beta-defensin 40</fullName>
        <shortName>BD-40</shortName>
        <shortName>mBD-40</shortName>
    </recommendedName>
    <alternativeName>
        <fullName>Defensin, beta 40</fullName>
    </alternativeName>
</protein>
<reference key="1">
    <citation type="journal article" date="2004" name="J. Biol. Chem.">
        <title>Identification on mouse chromosome 8 of new beta-defensin genes with regionally specific expression in the male reproductive organ.</title>
        <authorList>
            <person name="Zaballos A."/>
            <person name="Villares R."/>
            <person name="Albar J.P."/>
            <person name="Martinez-A C."/>
            <person name="Marquez G."/>
        </authorList>
    </citation>
    <scope>NUCLEOTIDE SEQUENCE [MRNA]</scope>
    <scope>TISSUE SPECIFICITY</scope>
    <source>
        <strain>BALB/cJ</strain>
        <tissue>Epididymis</tissue>
    </source>
</reference>
<reference key="2">
    <citation type="submission" date="2003-07" db="EMBL/GenBank/DDBJ databases">
        <title>Likelihood based analysis of the murine beta defensin gene family reveals the amino acids subject to positive selection.</title>
        <authorList>
            <person name="Maxwell A."/>
            <person name="Dorin J.R."/>
        </authorList>
    </citation>
    <scope>NUCLEOTIDE SEQUENCE [MRNA]</scope>
    <source>
        <strain>C57BL/6J</strain>
    </source>
</reference>
<keyword id="KW-0044">Antibiotic</keyword>
<keyword id="KW-0929">Antimicrobial</keyword>
<keyword id="KW-0211">Defensin</keyword>
<keyword id="KW-1015">Disulfide bond</keyword>
<keyword id="KW-1185">Reference proteome</keyword>
<keyword id="KW-0964">Secreted</keyword>
<keyword id="KW-0732">Signal</keyword>
<evidence type="ECO:0000250" key="1"/>
<evidence type="ECO:0000255" key="2"/>
<evidence type="ECO:0000269" key="3">
    <source>
    </source>
</evidence>
<evidence type="ECO:0000305" key="4"/>